<name>DNLJ_ECOLC</name>
<keyword id="KW-0227">DNA damage</keyword>
<keyword id="KW-0234">DNA repair</keyword>
<keyword id="KW-0235">DNA replication</keyword>
<keyword id="KW-0436">Ligase</keyword>
<keyword id="KW-0460">Magnesium</keyword>
<keyword id="KW-0464">Manganese</keyword>
<keyword id="KW-0479">Metal-binding</keyword>
<keyword id="KW-0520">NAD</keyword>
<keyword id="KW-0862">Zinc</keyword>
<sequence length="671" mass="73606">MESIEQQLTELRTTLRHHEYLYHVMDAPEIPDAEYDRLMRELRELETKHPELITPDSPTQRVGAAPLAAFSQIRHEVPMLSLDNVFDEESFLAFNKRVQDRLKNNEKVTWCCELKLDGLAVSILYENGVLVSAATRGDGTTGEDITSNVRTIRAIPLKLHGENIPARLEVRGEVFLPQAGFEKINEDARRTGGKVFANPRNAAAGSLRQLDPRITAKRPLTFFCYGVGVLEGGELPDTHLGRLLQFKKWGLPVSDRVTLCESAEEVLAFYHKVEEDRPTLGFDIDGVVIKVNSLAQQEQLGFVARAPRWAVAFKFPAQEQMTFVRDVEFQVGRTGAITPVARLEPVHVAGVLVSNATLHNADEIERLGLRIGDKVVIRRAGDVIPQVVNVVLSERPEDTREVVFPTHCPVCGSDVERVEGEAVARCTGGLICGAQRKESLKHFVSRRAMDVDGMGDKIIDQLVEKEYVHTPADLFKLTAGKLTGLERMGPKSAQNVVNALEKAKETTFARFLYALGIREVGEATAAGLAAYFGTLEALEAASIEELQKVPDVGIVVASHVHNFFAEESNRNVISELLAEGVHWPAPIVINAEEIDSPFAGKTVVLTGSLSQMSRDDAKARLVELGAKVAGSVSKKTDLVIAGEAAGSKLAKAQELGIEVIDEAEMLRLLGS</sequence>
<feature type="chain" id="PRO_0000380376" description="DNA ligase">
    <location>
        <begin position="1"/>
        <end position="671"/>
    </location>
</feature>
<feature type="domain" description="BRCT" evidence="1">
    <location>
        <begin position="593"/>
        <end position="671"/>
    </location>
</feature>
<feature type="active site" description="N6-AMP-lysine intermediate" evidence="1">
    <location>
        <position position="115"/>
    </location>
</feature>
<feature type="binding site" evidence="1">
    <location>
        <begin position="32"/>
        <end position="36"/>
    </location>
    <ligand>
        <name>NAD(+)</name>
        <dbReference type="ChEBI" id="CHEBI:57540"/>
    </ligand>
</feature>
<feature type="binding site" evidence="1">
    <location>
        <begin position="81"/>
        <end position="82"/>
    </location>
    <ligand>
        <name>NAD(+)</name>
        <dbReference type="ChEBI" id="CHEBI:57540"/>
    </ligand>
</feature>
<feature type="binding site" evidence="1">
    <location>
        <position position="113"/>
    </location>
    <ligand>
        <name>NAD(+)</name>
        <dbReference type="ChEBI" id="CHEBI:57540"/>
    </ligand>
</feature>
<feature type="binding site" evidence="1">
    <location>
        <position position="136"/>
    </location>
    <ligand>
        <name>NAD(+)</name>
        <dbReference type="ChEBI" id="CHEBI:57540"/>
    </ligand>
</feature>
<feature type="binding site" evidence="1">
    <location>
        <position position="173"/>
    </location>
    <ligand>
        <name>NAD(+)</name>
        <dbReference type="ChEBI" id="CHEBI:57540"/>
    </ligand>
</feature>
<feature type="binding site" evidence="1">
    <location>
        <position position="290"/>
    </location>
    <ligand>
        <name>NAD(+)</name>
        <dbReference type="ChEBI" id="CHEBI:57540"/>
    </ligand>
</feature>
<feature type="binding site" evidence="1">
    <location>
        <position position="314"/>
    </location>
    <ligand>
        <name>NAD(+)</name>
        <dbReference type="ChEBI" id="CHEBI:57540"/>
    </ligand>
</feature>
<feature type="binding site" evidence="1">
    <location>
        <position position="408"/>
    </location>
    <ligand>
        <name>Zn(2+)</name>
        <dbReference type="ChEBI" id="CHEBI:29105"/>
    </ligand>
</feature>
<feature type="binding site" evidence="1">
    <location>
        <position position="411"/>
    </location>
    <ligand>
        <name>Zn(2+)</name>
        <dbReference type="ChEBI" id="CHEBI:29105"/>
    </ligand>
</feature>
<feature type="binding site" evidence="1">
    <location>
        <position position="426"/>
    </location>
    <ligand>
        <name>Zn(2+)</name>
        <dbReference type="ChEBI" id="CHEBI:29105"/>
    </ligand>
</feature>
<feature type="binding site" evidence="1">
    <location>
        <position position="432"/>
    </location>
    <ligand>
        <name>Zn(2+)</name>
        <dbReference type="ChEBI" id="CHEBI:29105"/>
    </ligand>
</feature>
<reference key="1">
    <citation type="submission" date="2008-02" db="EMBL/GenBank/DDBJ databases">
        <title>Complete sequence of Escherichia coli C str. ATCC 8739.</title>
        <authorList>
            <person name="Copeland A."/>
            <person name="Lucas S."/>
            <person name="Lapidus A."/>
            <person name="Glavina del Rio T."/>
            <person name="Dalin E."/>
            <person name="Tice H."/>
            <person name="Bruce D."/>
            <person name="Goodwin L."/>
            <person name="Pitluck S."/>
            <person name="Kiss H."/>
            <person name="Brettin T."/>
            <person name="Detter J.C."/>
            <person name="Han C."/>
            <person name="Kuske C.R."/>
            <person name="Schmutz J."/>
            <person name="Larimer F."/>
            <person name="Land M."/>
            <person name="Hauser L."/>
            <person name="Kyrpides N."/>
            <person name="Mikhailova N."/>
            <person name="Ingram L."/>
            <person name="Richardson P."/>
        </authorList>
    </citation>
    <scope>NUCLEOTIDE SEQUENCE [LARGE SCALE GENOMIC DNA]</scope>
    <source>
        <strain>ATCC 8739 / DSM 1576 / NBRC 3972 / NCIMB 8545 / WDCM 00012 / Crooks</strain>
    </source>
</reference>
<protein>
    <recommendedName>
        <fullName evidence="1">DNA ligase</fullName>
        <ecNumber evidence="1">6.5.1.2</ecNumber>
    </recommendedName>
    <alternativeName>
        <fullName evidence="1">Polydeoxyribonucleotide synthase [NAD(+)]</fullName>
    </alternativeName>
</protein>
<comment type="function">
    <text evidence="1">DNA ligase that catalyzes the formation of phosphodiester linkages between 5'-phosphoryl and 3'-hydroxyl groups in double-stranded DNA using NAD as a coenzyme and as the energy source for the reaction. It is essential for DNA replication and repair of damaged DNA.</text>
</comment>
<comment type="catalytic activity">
    <reaction evidence="1">
        <text>NAD(+) + (deoxyribonucleotide)n-3'-hydroxyl + 5'-phospho-(deoxyribonucleotide)m = (deoxyribonucleotide)n+m + AMP + beta-nicotinamide D-nucleotide.</text>
        <dbReference type="EC" id="6.5.1.2"/>
    </reaction>
</comment>
<comment type="cofactor">
    <cofactor evidence="1">
        <name>Mg(2+)</name>
        <dbReference type="ChEBI" id="CHEBI:18420"/>
    </cofactor>
    <cofactor evidence="1">
        <name>Mn(2+)</name>
        <dbReference type="ChEBI" id="CHEBI:29035"/>
    </cofactor>
</comment>
<comment type="similarity">
    <text evidence="1">Belongs to the NAD-dependent DNA ligase family. LigA subfamily.</text>
</comment>
<evidence type="ECO:0000255" key="1">
    <source>
        <dbReference type="HAMAP-Rule" id="MF_01588"/>
    </source>
</evidence>
<proteinExistence type="inferred from homology"/>
<accession>B1IX60</accession>
<gene>
    <name evidence="1" type="primary">ligA</name>
    <name type="ordered locus">EcolC_1267</name>
</gene>
<dbReference type="EC" id="6.5.1.2" evidence="1"/>
<dbReference type="EMBL" id="CP000946">
    <property type="protein sequence ID" value="ACA76933.1"/>
    <property type="molecule type" value="Genomic_DNA"/>
</dbReference>
<dbReference type="RefSeq" id="WP_000443661.1">
    <property type="nucleotide sequence ID" value="NZ_MTFT01000002.1"/>
</dbReference>
<dbReference type="SMR" id="B1IX60"/>
<dbReference type="KEGG" id="ecl:EcolC_1267"/>
<dbReference type="HOGENOM" id="CLU_007764_2_1_6"/>
<dbReference type="GO" id="GO:0005829">
    <property type="term" value="C:cytosol"/>
    <property type="evidence" value="ECO:0007669"/>
    <property type="project" value="TreeGrafter"/>
</dbReference>
<dbReference type="GO" id="GO:0003677">
    <property type="term" value="F:DNA binding"/>
    <property type="evidence" value="ECO:0007669"/>
    <property type="project" value="InterPro"/>
</dbReference>
<dbReference type="GO" id="GO:0003911">
    <property type="term" value="F:DNA ligase (NAD+) activity"/>
    <property type="evidence" value="ECO:0007669"/>
    <property type="project" value="UniProtKB-UniRule"/>
</dbReference>
<dbReference type="GO" id="GO:0046872">
    <property type="term" value="F:metal ion binding"/>
    <property type="evidence" value="ECO:0007669"/>
    <property type="project" value="UniProtKB-KW"/>
</dbReference>
<dbReference type="GO" id="GO:0006281">
    <property type="term" value="P:DNA repair"/>
    <property type="evidence" value="ECO:0007669"/>
    <property type="project" value="UniProtKB-KW"/>
</dbReference>
<dbReference type="GO" id="GO:0006260">
    <property type="term" value="P:DNA replication"/>
    <property type="evidence" value="ECO:0007669"/>
    <property type="project" value="UniProtKB-KW"/>
</dbReference>
<dbReference type="CDD" id="cd17748">
    <property type="entry name" value="BRCT_DNA_ligase_like"/>
    <property type="match status" value="1"/>
</dbReference>
<dbReference type="CDD" id="cd00114">
    <property type="entry name" value="LIGANc"/>
    <property type="match status" value="1"/>
</dbReference>
<dbReference type="FunFam" id="1.10.150.20:FF:000006">
    <property type="entry name" value="DNA ligase"/>
    <property type="match status" value="1"/>
</dbReference>
<dbReference type="FunFam" id="1.10.150.20:FF:000007">
    <property type="entry name" value="DNA ligase"/>
    <property type="match status" value="1"/>
</dbReference>
<dbReference type="FunFam" id="1.10.287.610:FF:000002">
    <property type="entry name" value="DNA ligase"/>
    <property type="match status" value="1"/>
</dbReference>
<dbReference type="FunFam" id="2.40.50.140:FF:000012">
    <property type="entry name" value="DNA ligase"/>
    <property type="match status" value="1"/>
</dbReference>
<dbReference type="FunFam" id="3.30.470.30:FF:000001">
    <property type="entry name" value="DNA ligase"/>
    <property type="match status" value="1"/>
</dbReference>
<dbReference type="FunFam" id="3.40.50.10190:FF:000004">
    <property type="entry name" value="DNA ligase"/>
    <property type="match status" value="1"/>
</dbReference>
<dbReference type="FunFam" id="6.20.10.30:FF:000001">
    <property type="entry name" value="DNA ligase"/>
    <property type="match status" value="1"/>
</dbReference>
<dbReference type="Gene3D" id="6.20.10.30">
    <property type="match status" value="1"/>
</dbReference>
<dbReference type="Gene3D" id="1.10.150.20">
    <property type="entry name" value="5' to 3' exonuclease, C-terminal subdomain"/>
    <property type="match status" value="2"/>
</dbReference>
<dbReference type="Gene3D" id="3.40.50.10190">
    <property type="entry name" value="BRCT domain"/>
    <property type="match status" value="1"/>
</dbReference>
<dbReference type="Gene3D" id="3.30.470.30">
    <property type="entry name" value="DNA ligase/mRNA capping enzyme"/>
    <property type="match status" value="1"/>
</dbReference>
<dbReference type="Gene3D" id="1.10.287.610">
    <property type="entry name" value="Helix hairpin bin"/>
    <property type="match status" value="1"/>
</dbReference>
<dbReference type="Gene3D" id="2.40.50.140">
    <property type="entry name" value="Nucleic acid-binding proteins"/>
    <property type="match status" value="1"/>
</dbReference>
<dbReference type="HAMAP" id="MF_01588">
    <property type="entry name" value="DNA_ligase_A"/>
    <property type="match status" value="1"/>
</dbReference>
<dbReference type="InterPro" id="IPR001357">
    <property type="entry name" value="BRCT_dom"/>
</dbReference>
<dbReference type="InterPro" id="IPR036420">
    <property type="entry name" value="BRCT_dom_sf"/>
</dbReference>
<dbReference type="InterPro" id="IPR041663">
    <property type="entry name" value="DisA/LigA_HHH"/>
</dbReference>
<dbReference type="InterPro" id="IPR001679">
    <property type="entry name" value="DNA_ligase"/>
</dbReference>
<dbReference type="InterPro" id="IPR018239">
    <property type="entry name" value="DNA_ligase_AS"/>
</dbReference>
<dbReference type="InterPro" id="IPR033136">
    <property type="entry name" value="DNA_ligase_CS"/>
</dbReference>
<dbReference type="InterPro" id="IPR013839">
    <property type="entry name" value="DNAligase_adenylation"/>
</dbReference>
<dbReference type="InterPro" id="IPR013840">
    <property type="entry name" value="DNAligase_N"/>
</dbReference>
<dbReference type="InterPro" id="IPR003583">
    <property type="entry name" value="Hlx-hairpin-Hlx_DNA-bd_motif"/>
</dbReference>
<dbReference type="InterPro" id="IPR012340">
    <property type="entry name" value="NA-bd_OB-fold"/>
</dbReference>
<dbReference type="InterPro" id="IPR004150">
    <property type="entry name" value="NAD_DNA_ligase_OB"/>
</dbReference>
<dbReference type="InterPro" id="IPR010994">
    <property type="entry name" value="RuvA_2-like"/>
</dbReference>
<dbReference type="InterPro" id="IPR004149">
    <property type="entry name" value="Znf_DNAligase_C4"/>
</dbReference>
<dbReference type="NCBIfam" id="TIGR00575">
    <property type="entry name" value="dnlj"/>
    <property type="match status" value="1"/>
</dbReference>
<dbReference type="NCBIfam" id="NF005932">
    <property type="entry name" value="PRK07956.1"/>
    <property type="match status" value="1"/>
</dbReference>
<dbReference type="PANTHER" id="PTHR23389">
    <property type="entry name" value="CHROMOSOME TRANSMISSION FIDELITY FACTOR 18"/>
    <property type="match status" value="1"/>
</dbReference>
<dbReference type="PANTHER" id="PTHR23389:SF9">
    <property type="entry name" value="DNA LIGASE"/>
    <property type="match status" value="1"/>
</dbReference>
<dbReference type="Pfam" id="PF00533">
    <property type="entry name" value="BRCT"/>
    <property type="match status" value="1"/>
</dbReference>
<dbReference type="Pfam" id="PF01653">
    <property type="entry name" value="DNA_ligase_aden"/>
    <property type="match status" value="1"/>
</dbReference>
<dbReference type="Pfam" id="PF03120">
    <property type="entry name" value="DNA_ligase_OB"/>
    <property type="match status" value="1"/>
</dbReference>
<dbReference type="Pfam" id="PF03119">
    <property type="entry name" value="DNA_ligase_ZBD"/>
    <property type="match status" value="1"/>
</dbReference>
<dbReference type="Pfam" id="PF12826">
    <property type="entry name" value="HHH_2"/>
    <property type="match status" value="1"/>
</dbReference>
<dbReference type="Pfam" id="PF14520">
    <property type="entry name" value="HHH_5"/>
    <property type="match status" value="1"/>
</dbReference>
<dbReference type="Pfam" id="PF22745">
    <property type="entry name" value="Nlig-Ia"/>
    <property type="match status" value="1"/>
</dbReference>
<dbReference type="PIRSF" id="PIRSF001604">
    <property type="entry name" value="LigA"/>
    <property type="match status" value="1"/>
</dbReference>
<dbReference type="SMART" id="SM00292">
    <property type="entry name" value="BRCT"/>
    <property type="match status" value="1"/>
</dbReference>
<dbReference type="SMART" id="SM00278">
    <property type="entry name" value="HhH1"/>
    <property type="match status" value="4"/>
</dbReference>
<dbReference type="SMART" id="SM00532">
    <property type="entry name" value="LIGANc"/>
    <property type="match status" value="1"/>
</dbReference>
<dbReference type="SUPFAM" id="SSF52113">
    <property type="entry name" value="BRCT domain"/>
    <property type="match status" value="1"/>
</dbReference>
<dbReference type="SUPFAM" id="SSF56091">
    <property type="entry name" value="DNA ligase/mRNA capping enzyme, catalytic domain"/>
    <property type="match status" value="1"/>
</dbReference>
<dbReference type="SUPFAM" id="SSF50249">
    <property type="entry name" value="Nucleic acid-binding proteins"/>
    <property type="match status" value="1"/>
</dbReference>
<dbReference type="SUPFAM" id="SSF47781">
    <property type="entry name" value="RuvA domain 2-like"/>
    <property type="match status" value="1"/>
</dbReference>
<dbReference type="PROSITE" id="PS50172">
    <property type="entry name" value="BRCT"/>
    <property type="match status" value="1"/>
</dbReference>
<dbReference type="PROSITE" id="PS01055">
    <property type="entry name" value="DNA_LIGASE_N1"/>
    <property type="match status" value="1"/>
</dbReference>
<dbReference type="PROSITE" id="PS01056">
    <property type="entry name" value="DNA_LIGASE_N2"/>
    <property type="match status" value="1"/>
</dbReference>
<organism>
    <name type="scientific">Escherichia coli (strain ATCC 8739 / DSM 1576 / NBRC 3972 / NCIMB 8545 / WDCM 00012 / Crooks)</name>
    <dbReference type="NCBI Taxonomy" id="481805"/>
    <lineage>
        <taxon>Bacteria</taxon>
        <taxon>Pseudomonadati</taxon>
        <taxon>Pseudomonadota</taxon>
        <taxon>Gammaproteobacteria</taxon>
        <taxon>Enterobacterales</taxon>
        <taxon>Enterobacteriaceae</taxon>
        <taxon>Escherichia</taxon>
    </lineage>
</organism>